<evidence type="ECO:0000250" key="1">
    <source>
        <dbReference type="UniProtKB" id="P02470"/>
    </source>
</evidence>
<evidence type="ECO:0000250" key="2">
    <source>
        <dbReference type="UniProtKB" id="P02489"/>
    </source>
</evidence>
<evidence type="ECO:0000255" key="3">
    <source>
        <dbReference type="PROSITE-ProRule" id="PRU00285"/>
    </source>
</evidence>
<proteinExistence type="evidence at transcript level"/>
<dbReference type="EMBL" id="X96592">
    <property type="protein sequence ID" value="CAA65410.1"/>
    <property type="molecule type" value="mRNA"/>
</dbReference>
<dbReference type="SMR" id="O12984"/>
<dbReference type="Proteomes" id="UP000694400">
    <property type="component" value="Unplaced"/>
</dbReference>
<dbReference type="GO" id="GO:0005737">
    <property type="term" value="C:cytoplasm"/>
    <property type="evidence" value="ECO:0007669"/>
    <property type="project" value="UniProtKB-SubCell"/>
</dbReference>
<dbReference type="GO" id="GO:0005634">
    <property type="term" value="C:nucleus"/>
    <property type="evidence" value="ECO:0007669"/>
    <property type="project" value="UniProtKB-SubCell"/>
</dbReference>
<dbReference type="GO" id="GO:0046872">
    <property type="term" value="F:metal ion binding"/>
    <property type="evidence" value="ECO:0007669"/>
    <property type="project" value="UniProtKB-KW"/>
</dbReference>
<dbReference type="GO" id="GO:0005212">
    <property type="term" value="F:structural constituent of eye lens"/>
    <property type="evidence" value="ECO:0007669"/>
    <property type="project" value="UniProtKB-KW"/>
</dbReference>
<dbReference type="GO" id="GO:0051082">
    <property type="term" value="F:unfolded protein binding"/>
    <property type="evidence" value="ECO:0007669"/>
    <property type="project" value="TreeGrafter"/>
</dbReference>
<dbReference type="GO" id="GO:0002088">
    <property type="term" value="P:lens development in camera-type eye"/>
    <property type="evidence" value="ECO:0007669"/>
    <property type="project" value="TreeGrafter"/>
</dbReference>
<dbReference type="GO" id="GO:0043066">
    <property type="term" value="P:negative regulation of apoptotic process"/>
    <property type="evidence" value="ECO:0007669"/>
    <property type="project" value="TreeGrafter"/>
</dbReference>
<dbReference type="GO" id="GO:0042026">
    <property type="term" value="P:protein refolding"/>
    <property type="evidence" value="ECO:0007669"/>
    <property type="project" value="TreeGrafter"/>
</dbReference>
<dbReference type="GO" id="GO:0009408">
    <property type="term" value="P:response to heat"/>
    <property type="evidence" value="ECO:0007669"/>
    <property type="project" value="TreeGrafter"/>
</dbReference>
<dbReference type="CDD" id="cd06497">
    <property type="entry name" value="ACD_alphaA-crystallin_HspB4"/>
    <property type="match status" value="1"/>
</dbReference>
<dbReference type="FunFam" id="2.60.40.790:FF:000008">
    <property type="entry name" value="Alpha-crystallin A chain"/>
    <property type="match status" value="1"/>
</dbReference>
<dbReference type="Gene3D" id="2.60.40.790">
    <property type="match status" value="1"/>
</dbReference>
<dbReference type="InterPro" id="IPR002068">
    <property type="entry name" value="A-crystallin/Hsp20_dom"/>
</dbReference>
<dbReference type="InterPro" id="IPR055269">
    <property type="entry name" value="Alpha-crystallin/HSP_16"/>
</dbReference>
<dbReference type="InterPro" id="IPR001436">
    <property type="entry name" value="Alpha-crystallin/sHSP_animal"/>
</dbReference>
<dbReference type="InterPro" id="IPR003090">
    <property type="entry name" value="Alpha-crystallin_N"/>
</dbReference>
<dbReference type="InterPro" id="IPR008978">
    <property type="entry name" value="HSP20-like_chaperone"/>
</dbReference>
<dbReference type="PANTHER" id="PTHR45640:SF14">
    <property type="entry name" value="ALPHA-CRYSTALLIN A CHAIN"/>
    <property type="match status" value="1"/>
</dbReference>
<dbReference type="PANTHER" id="PTHR45640">
    <property type="entry name" value="HEAT SHOCK PROTEIN HSP-12.2-RELATED"/>
    <property type="match status" value="1"/>
</dbReference>
<dbReference type="Pfam" id="PF00525">
    <property type="entry name" value="Crystallin"/>
    <property type="match status" value="1"/>
</dbReference>
<dbReference type="Pfam" id="PF00011">
    <property type="entry name" value="HSP20"/>
    <property type="match status" value="1"/>
</dbReference>
<dbReference type="PIRSF" id="PIRSF036514">
    <property type="entry name" value="Sm_HSP_B1"/>
    <property type="match status" value="1"/>
</dbReference>
<dbReference type="PRINTS" id="PR00299">
    <property type="entry name" value="ACRYSTALLIN"/>
</dbReference>
<dbReference type="SUPFAM" id="SSF49764">
    <property type="entry name" value="HSP20-like chaperones"/>
    <property type="match status" value="1"/>
</dbReference>
<dbReference type="PROSITE" id="PS01031">
    <property type="entry name" value="SHSP"/>
    <property type="match status" value="1"/>
</dbReference>
<name>CRYAA_ANAPL</name>
<reference key="1">
    <citation type="journal article" date="1997" name="Mol. Phylogenet. Evol.">
        <title>Alpha-crystallin sequences support a galliform/anseriform clade.</title>
        <authorList>
            <person name="Caspers G.J."/>
            <person name="Uit de Weerd D."/>
            <person name="Wattel J."/>
            <person name="de Jong W.W."/>
        </authorList>
    </citation>
    <scope>NUCLEOTIDE SEQUENCE [MRNA]</scope>
    <source>
        <strain>Pekin breed</strain>
        <tissue>Lens</tissue>
    </source>
</reference>
<accession>O12984</accession>
<comment type="function">
    <text evidence="2">Contributes to the transparency and refractive index of the lens. May act as a chaperone, preventing aggregation of various proteins under a wide range of stress conditions.</text>
</comment>
<comment type="subunit">
    <text evidence="1 2">Heteropolymer composed of three CRYAA and one CRYAB subunits (By similarity). Inter-subunit bridging via zinc ions enhances stability, which is crucial as there is no protein turn over in the lens. Can also form homodimers and homotetramers (dimers of dimers) which serve as the building blocks of homooligomers (By similarity). Within homooligomers, the zinc-binding motif is created from residues of 3 different molecules. His-89 and Glu-91 from one molecule are ligands of the zinc ion, and His-96 and His-143 residues from additional molecules complete the site with tetrahedral coordination geometry (By similarity).</text>
</comment>
<comment type="subcellular location">
    <subcellularLocation>
        <location evidence="2">Cytoplasm</location>
    </subcellularLocation>
    <subcellularLocation>
        <location evidence="2">Nucleus</location>
    </subcellularLocation>
    <text evidence="2">Translocates to the nucleus during heat shock.</text>
</comment>
<comment type="similarity">
    <text evidence="3">Belongs to the small heat shock protein (HSP20) family.</text>
</comment>
<organism>
    <name type="scientific">Anas platyrhynchos</name>
    <name type="common">Mallard</name>
    <name type="synonym">Anas boschas</name>
    <dbReference type="NCBI Taxonomy" id="8839"/>
    <lineage>
        <taxon>Eukaryota</taxon>
        <taxon>Metazoa</taxon>
        <taxon>Chordata</taxon>
        <taxon>Craniata</taxon>
        <taxon>Vertebrata</taxon>
        <taxon>Euteleostomi</taxon>
        <taxon>Archelosauria</taxon>
        <taxon>Archosauria</taxon>
        <taxon>Dinosauria</taxon>
        <taxon>Saurischia</taxon>
        <taxon>Theropoda</taxon>
        <taxon>Coelurosauria</taxon>
        <taxon>Aves</taxon>
        <taxon>Neognathae</taxon>
        <taxon>Galloanserae</taxon>
        <taxon>Anseriformes</taxon>
        <taxon>Anatidae</taxon>
        <taxon>Anatinae</taxon>
        <taxon>Anas</taxon>
    </lineage>
</organism>
<gene>
    <name type="primary">CRYAA</name>
</gene>
<sequence>RALGPLIPSRLFDQFFGEGLLEYDLLPLFSSTISPYYRQSLFRSVLESGISEVRSDRDKFTIMLDVKHFSPEDLSVKIIDDFVEIHGKHSERQDDHGYISREFHRRYRLPANVDQSAITCSLSGDGMLTFSGPKVPSNMDPTHSERPIP</sequence>
<feature type="chain" id="PRO_0000125892" description="Alpha-crystallin A chain">
    <location>
        <begin position="1" status="less than"/>
        <end position="149" status="greater than"/>
    </location>
</feature>
<feature type="domain" description="sHSP" evidence="3">
    <location>
        <begin position="41"/>
        <end position="149"/>
    </location>
</feature>
<feature type="binding site" evidence="1">
    <location>
        <position position="89"/>
    </location>
    <ligand>
        <name>Zn(2+)</name>
        <dbReference type="ChEBI" id="CHEBI:29105"/>
        <label>1</label>
    </ligand>
</feature>
<feature type="binding site" evidence="1">
    <location>
        <position position="91"/>
    </location>
    <ligand>
        <name>Zn(2+)</name>
        <dbReference type="ChEBI" id="CHEBI:29105"/>
        <label>1</label>
    </ligand>
</feature>
<feature type="binding site" evidence="1">
    <location>
        <position position="96"/>
    </location>
    <ligand>
        <name>Zn(2+)</name>
        <dbReference type="ChEBI" id="CHEBI:29105"/>
        <label>2</label>
    </ligand>
</feature>
<feature type="binding site" evidence="1">
    <location>
        <position position="143"/>
    </location>
    <ligand>
        <name>Zn(2+)</name>
        <dbReference type="ChEBI" id="CHEBI:29105"/>
        <label>3</label>
    </ligand>
</feature>
<feature type="non-terminal residue">
    <location>
        <position position="1"/>
    </location>
</feature>
<feature type="non-terminal residue">
    <location>
        <position position="149"/>
    </location>
</feature>
<keyword id="KW-0963">Cytoplasm</keyword>
<keyword id="KW-0273">Eye lens protein</keyword>
<keyword id="KW-0479">Metal-binding</keyword>
<keyword id="KW-0539">Nucleus</keyword>
<keyword id="KW-0862">Zinc</keyword>
<protein>
    <recommendedName>
        <fullName>Alpha-crystallin A chain</fullName>
    </recommendedName>
</protein>